<evidence type="ECO:0000255" key="1">
    <source>
        <dbReference type="HAMAP-Rule" id="MF_01042"/>
    </source>
</evidence>
<accession>A9N457</accession>
<gene>
    <name evidence="1" type="primary">smrB</name>
    <name type="ordered locus">SPAB_00583</name>
</gene>
<name>SMRB_SALPB</name>
<dbReference type="EC" id="3.1.-.-" evidence="1"/>
<dbReference type="EMBL" id="CP000886">
    <property type="protein sequence ID" value="ABX66009.1"/>
    <property type="molecule type" value="Genomic_DNA"/>
</dbReference>
<dbReference type="RefSeq" id="WP_000730794.1">
    <property type="nucleotide sequence ID" value="NC_010102.1"/>
</dbReference>
<dbReference type="SMR" id="A9N457"/>
<dbReference type="KEGG" id="spq:SPAB_00583"/>
<dbReference type="PATRIC" id="fig|1016998.12.peg.545"/>
<dbReference type="HOGENOM" id="CLU_055978_4_0_6"/>
<dbReference type="BioCyc" id="SENT1016998:SPAB_RS02400-MONOMER"/>
<dbReference type="Proteomes" id="UP000008556">
    <property type="component" value="Chromosome"/>
</dbReference>
<dbReference type="GO" id="GO:0004521">
    <property type="term" value="F:RNA endonuclease activity"/>
    <property type="evidence" value="ECO:0007669"/>
    <property type="project" value="UniProtKB-UniRule"/>
</dbReference>
<dbReference type="GO" id="GO:0019843">
    <property type="term" value="F:rRNA binding"/>
    <property type="evidence" value="ECO:0007669"/>
    <property type="project" value="UniProtKB-UniRule"/>
</dbReference>
<dbReference type="GO" id="GO:0072344">
    <property type="term" value="P:rescue of stalled ribosome"/>
    <property type="evidence" value="ECO:0007669"/>
    <property type="project" value="UniProtKB-UniRule"/>
</dbReference>
<dbReference type="Gene3D" id="3.30.1370.110">
    <property type="match status" value="1"/>
</dbReference>
<dbReference type="HAMAP" id="MF_01042">
    <property type="entry name" value="SmrB"/>
    <property type="match status" value="1"/>
</dbReference>
<dbReference type="InterPro" id="IPR002625">
    <property type="entry name" value="Smr_dom"/>
</dbReference>
<dbReference type="InterPro" id="IPR036063">
    <property type="entry name" value="Smr_dom_sf"/>
</dbReference>
<dbReference type="InterPro" id="IPR022990">
    <property type="entry name" value="SmrB-like"/>
</dbReference>
<dbReference type="NCBIfam" id="NF003432">
    <property type="entry name" value="PRK04946.1"/>
    <property type="match status" value="1"/>
</dbReference>
<dbReference type="PANTHER" id="PTHR35562">
    <property type="entry name" value="DNA ENDONUCLEASE SMRA-RELATED"/>
    <property type="match status" value="1"/>
</dbReference>
<dbReference type="PANTHER" id="PTHR35562:SF1">
    <property type="entry name" value="UPF0115 PROTEIN YFCN"/>
    <property type="match status" value="1"/>
</dbReference>
<dbReference type="Pfam" id="PF01713">
    <property type="entry name" value="Smr"/>
    <property type="match status" value="1"/>
</dbReference>
<dbReference type="SMART" id="SM00463">
    <property type="entry name" value="SMR"/>
    <property type="match status" value="1"/>
</dbReference>
<dbReference type="SUPFAM" id="SSF160443">
    <property type="entry name" value="SMR domain-like"/>
    <property type="match status" value="1"/>
</dbReference>
<dbReference type="PROSITE" id="PS50828">
    <property type="entry name" value="SMR"/>
    <property type="match status" value="1"/>
</dbReference>
<comment type="function">
    <text evidence="1">Acts as a ribosome collision sensor. Detects stalled/collided disomes (pairs of ribosomes where the leading ribosome is stalled and a second ribosome has collided with it) and endonucleolytically cleaves mRNA at the 5' boundary of the stalled ribosome. Stalled/collided disomes form a new interface (primarily via the 30S subunits) that binds SmrB. Cleaved mRNA becomes available for tmRNA ligation, leading to ribosomal subunit dissociation and rescue of stalled ribosomes.</text>
</comment>
<comment type="subunit">
    <text evidence="1">Associates with collided ribosomes, but not with correctly translating polysomes.</text>
</comment>
<comment type="similarity">
    <text evidence="1">Belongs to the SmrB family.</text>
</comment>
<reference key="1">
    <citation type="submission" date="2007-11" db="EMBL/GenBank/DDBJ databases">
        <authorList>
            <consortium name="The Salmonella enterica serovar Paratyphi B Genome Sequencing Project"/>
            <person name="McClelland M."/>
            <person name="Sanderson E.K."/>
            <person name="Porwollik S."/>
            <person name="Spieth J."/>
            <person name="Clifton W.S."/>
            <person name="Fulton R."/>
            <person name="Cordes M."/>
            <person name="Wollam A."/>
            <person name="Shah N."/>
            <person name="Pepin K."/>
            <person name="Bhonagiri V."/>
            <person name="Nash W."/>
            <person name="Johnson M."/>
            <person name="Thiruvilangam P."/>
            <person name="Wilson R."/>
        </authorList>
    </citation>
    <scope>NUCLEOTIDE SEQUENCE [LARGE SCALE GENOMIC DNA]</scope>
    <source>
        <strain>ATCC BAA-1250 / SPB7</strain>
    </source>
</reference>
<organism>
    <name type="scientific">Salmonella paratyphi B (strain ATCC BAA-1250 / SPB7)</name>
    <dbReference type="NCBI Taxonomy" id="1016998"/>
    <lineage>
        <taxon>Bacteria</taxon>
        <taxon>Pseudomonadati</taxon>
        <taxon>Pseudomonadota</taxon>
        <taxon>Gammaproteobacteria</taxon>
        <taxon>Enterobacterales</taxon>
        <taxon>Enterobacteriaceae</taxon>
        <taxon>Salmonella</taxon>
    </lineage>
</organism>
<keyword id="KW-0255">Endonuclease</keyword>
<keyword id="KW-0378">Hydrolase</keyword>
<keyword id="KW-0540">Nuclease</keyword>
<keyword id="KW-0694">RNA-binding</keyword>
<keyword id="KW-0699">rRNA-binding</keyword>
<feature type="chain" id="PRO_1000084356" description="Ribosome rescue factor SmrB">
    <location>
        <begin position="1"/>
        <end position="183"/>
    </location>
</feature>
<feature type="domain" description="Smr" evidence="1">
    <location>
        <begin position="98"/>
        <end position="173"/>
    </location>
</feature>
<protein>
    <recommendedName>
        <fullName evidence="1">Ribosome rescue factor SmrB</fullName>
        <ecNumber evidence="1">3.1.-.-</ecNumber>
    </recommendedName>
</protein>
<sequence>MKKKTSLSEEDQALFRQLMVGTRKIKQDTIVHRPLRKKITEVPTRRLIQEQADASHYFSDEFQPLLNTEGPVKYVREDVSHFELKKMRRGDYSPELFLDLHGLTQLQAKQELGALIAACRREHIFCACVMHGHGKHILKQQTPLWLAQHPHVMAFHQAPKEYGGDAALLVLIEVEEWQPPELP</sequence>
<proteinExistence type="inferred from homology"/>